<evidence type="ECO:0000250" key="1"/>
<evidence type="ECO:0000255" key="2"/>
<evidence type="ECO:0000255" key="3">
    <source>
        <dbReference type="PROSITE-ProRule" id="PRU00716"/>
    </source>
</evidence>
<evidence type="ECO:0000305" key="4"/>
<protein>
    <recommendedName>
        <fullName>NADH-cytochrome b5 reductase 2</fullName>
        <ecNumber>1.6.2.2</ecNumber>
    </recommendedName>
    <alternativeName>
        <fullName>Mitochondrial cytochrome b reductase</fullName>
    </alternativeName>
</protein>
<accession>A2Q898</accession>
<feature type="chain" id="PRO_0000330172" description="NADH-cytochrome b5 reductase 2">
    <location>
        <begin position="1"/>
        <end position="322"/>
    </location>
</feature>
<feature type="transmembrane region" description="Helical" evidence="2">
    <location>
        <begin position="31"/>
        <end position="48"/>
    </location>
</feature>
<feature type="domain" description="FAD-binding FR-type" evidence="3">
    <location>
        <begin position="72"/>
        <end position="176"/>
    </location>
</feature>
<feature type="binding site" evidence="1">
    <location>
        <begin position="179"/>
        <end position="214"/>
    </location>
    <ligand>
        <name>FAD</name>
        <dbReference type="ChEBI" id="CHEBI:57692"/>
    </ligand>
</feature>
<sequence length="322" mass="36090">MFARQAFRCAQPLKQGFRKYSTEAPKGKSSLAPIYAAVGITGVGVGLYRYNSATAEAPAAVDRPKVFKGGDQGWFDLKLSEIEVLNHNTKRLRFEFEDKEALSGLQVASALLTKFKPADAKAVIRPYTPTSDEETPGYIDLVVKVYPNGPMSEHLHSMNVGQRLDFKGPIVKYPWETNKHNHICLIAGGTGITPMYQLAREIFKNPEDQTKVTLVFGNVKEEDILLKKEFEELENTYPRRFRAFYVLDNPPKEWTGGKGYISKELLKTVLPEPKEENIKIFVCGPPGMYKAISGTKNSPTDQGELSGILKELGYSKEQVFKF</sequence>
<reference key="1">
    <citation type="journal article" date="2007" name="Nat. Biotechnol.">
        <title>Genome sequencing and analysis of the versatile cell factory Aspergillus niger CBS 513.88.</title>
        <authorList>
            <person name="Pel H.J."/>
            <person name="de Winde J.H."/>
            <person name="Archer D.B."/>
            <person name="Dyer P.S."/>
            <person name="Hofmann G."/>
            <person name="Schaap P.J."/>
            <person name="Turner G."/>
            <person name="de Vries R.P."/>
            <person name="Albang R."/>
            <person name="Albermann K."/>
            <person name="Andersen M.R."/>
            <person name="Bendtsen J.D."/>
            <person name="Benen J.A.E."/>
            <person name="van den Berg M."/>
            <person name="Breestraat S."/>
            <person name="Caddick M.X."/>
            <person name="Contreras R."/>
            <person name="Cornell M."/>
            <person name="Coutinho P.M."/>
            <person name="Danchin E.G.J."/>
            <person name="Debets A.J.M."/>
            <person name="Dekker P."/>
            <person name="van Dijck P.W.M."/>
            <person name="van Dijk A."/>
            <person name="Dijkhuizen L."/>
            <person name="Driessen A.J.M."/>
            <person name="d'Enfert C."/>
            <person name="Geysens S."/>
            <person name="Goosen C."/>
            <person name="Groot G.S.P."/>
            <person name="de Groot P.W.J."/>
            <person name="Guillemette T."/>
            <person name="Henrissat B."/>
            <person name="Herweijer M."/>
            <person name="van den Hombergh J.P.T.W."/>
            <person name="van den Hondel C.A.M.J.J."/>
            <person name="van der Heijden R.T.J.M."/>
            <person name="van der Kaaij R.M."/>
            <person name="Klis F.M."/>
            <person name="Kools H.J."/>
            <person name="Kubicek C.P."/>
            <person name="van Kuyk P.A."/>
            <person name="Lauber J."/>
            <person name="Lu X."/>
            <person name="van der Maarel M.J.E.C."/>
            <person name="Meulenberg R."/>
            <person name="Menke H."/>
            <person name="Mortimer M.A."/>
            <person name="Nielsen J."/>
            <person name="Oliver S.G."/>
            <person name="Olsthoorn M."/>
            <person name="Pal K."/>
            <person name="van Peij N.N.M.E."/>
            <person name="Ram A.F.J."/>
            <person name="Rinas U."/>
            <person name="Roubos J.A."/>
            <person name="Sagt C.M.J."/>
            <person name="Schmoll M."/>
            <person name="Sun J."/>
            <person name="Ussery D."/>
            <person name="Varga J."/>
            <person name="Vervecken W."/>
            <person name="van de Vondervoort P.J.J."/>
            <person name="Wedler H."/>
            <person name="Woesten H.A.B."/>
            <person name="Zeng A.-P."/>
            <person name="van Ooyen A.J.J."/>
            <person name="Visser J."/>
            <person name="Stam H."/>
        </authorList>
    </citation>
    <scope>NUCLEOTIDE SEQUENCE [LARGE SCALE GENOMIC DNA]</scope>
    <source>
        <strain>ATCC MYA-4892 / CBS 513.88 / FGSC A1513</strain>
    </source>
</reference>
<name>MCR1_ASPNC</name>
<comment type="function">
    <text evidence="1">May mediate the reduction of outer membrane cytochrome b5.</text>
</comment>
<comment type="catalytic activity">
    <reaction>
        <text>2 Fe(III)-[cytochrome b5] + NADH = 2 Fe(II)-[cytochrome b5] + NAD(+) + H(+)</text>
        <dbReference type="Rhea" id="RHEA:46680"/>
        <dbReference type="Rhea" id="RHEA-COMP:10438"/>
        <dbReference type="Rhea" id="RHEA-COMP:10439"/>
        <dbReference type="ChEBI" id="CHEBI:15378"/>
        <dbReference type="ChEBI" id="CHEBI:29033"/>
        <dbReference type="ChEBI" id="CHEBI:29034"/>
        <dbReference type="ChEBI" id="CHEBI:57540"/>
        <dbReference type="ChEBI" id="CHEBI:57945"/>
        <dbReference type="EC" id="1.6.2.2"/>
    </reaction>
</comment>
<comment type="cofactor">
    <cofactor evidence="1">
        <name>FAD</name>
        <dbReference type="ChEBI" id="CHEBI:57692"/>
    </cofactor>
</comment>
<comment type="subcellular location">
    <subcellularLocation>
        <location evidence="1">Mitochondrion outer membrane</location>
        <topology evidence="1">Single-pass membrane protein</topology>
    </subcellularLocation>
</comment>
<comment type="similarity">
    <text evidence="4">Belongs to the flavoprotein pyridine nucleotide cytochrome reductase family.</text>
</comment>
<keyword id="KW-0274">FAD</keyword>
<keyword id="KW-0285">Flavoprotein</keyword>
<keyword id="KW-0472">Membrane</keyword>
<keyword id="KW-0496">Mitochondrion</keyword>
<keyword id="KW-1000">Mitochondrion outer membrane</keyword>
<keyword id="KW-0520">NAD</keyword>
<keyword id="KW-0560">Oxidoreductase</keyword>
<keyword id="KW-1185">Reference proteome</keyword>
<keyword id="KW-0812">Transmembrane</keyword>
<keyword id="KW-1133">Transmembrane helix</keyword>
<proteinExistence type="inferred from homology"/>
<dbReference type="EC" id="1.6.2.2"/>
<dbReference type="EMBL" id="AM269959">
    <property type="protein sequence ID" value="CAK36895.1"/>
    <property type="molecule type" value="Genomic_DNA"/>
</dbReference>
<dbReference type="RefSeq" id="XP_001388787.1">
    <property type="nucleotide sequence ID" value="XM_001388750.2"/>
</dbReference>
<dbReference type="SMR" id="A2Q898"/>
<dbReference type="EnsemblFungi" id="CAK36895">
    <property type="protein sequence ID" value="CAK36895"/>
    <property type="gene ID" value="An01g03570"/>
</dbReference>
<dbReference type="GeneID" id="4978482"/>
<dbReference type="KEGG" id="ang:An01g03570"/>
<dbReference type="VEuPathDB" id="FungiDB:An01g03570"/>
<dbReference type="HOGENOM" id="CLU_003827_9_1_1"/>
<dbReference type="Proteomes" id="UP000006706">
    <property type="component" value="Chromosome 2R"/>
</dbReference>
<dbReference type="GO" id="GO:0005741">
    <property type="term" value="C:mitochondrial outer membrane"/>
    <property type="evidence" value="ECO:0007669"/>
    <property type="project" value="UniProtKB-SubCell"/>
</dbReference>
<dbReference type="GO" id="GO:0004128">
    <property type="term" value="F:cytochrome-b5 reductase activity, acting on NAD(P)H"/>
    <property type="evidence" value="ECO:0007669"/>
    <property type="project" value="UniProtKB-EC"/>
</dbReference>
<dbReference type="GO" id="GO:0006696">
    <property type="term" value="P:ergosterol biosynthetic process"/>
    <property type="evidence" value="ECO:0007669"/>
    <property type="project" value="TreeGrafter"/>
</dbReference>
<dbReference type="CDD" id="cd06183">
    <property type="entry name" value="cyt_b5_reduct_like"/>
    <property type="match status" value="1"/>
</dbReference>
<dbReference type="FunFam" id="2.40.30.10:FF:000032">
    <property type="entry name" value="NADH-cytochrome b5 reductase"/>
    <property type="match status" value="1"/>
</dbReference>
<dbReference type="FunFam" id="3.40.50.80:FF:000009">
    <property type="entry name" value="NADH-cytochrome b5 reductase"/>
    <property type="match status" value="1"/>
</dbReference>
<dbReference type="Gene3D" id="3.40.50.80">
    <property type="entry name" value="Nucleotide-binding domain of ferredoxin-NADP reductase (FNR) module"/>
    <property type="match status" value="1"/>
</dbReference>
<dbReference type="Gene3D" id="2.40.30.10">
    <property type="entry name" value="Translation factors"/>
    <property type="match status" value="1"/>
</dbReference>
<dbReference type="InterPro" id="IPR001834">
    <property type="entry name" value="CBR-like"/>
</dbReference>
<dbReference type="InterPro" id="IPR008333">
    <property type="entry name" value="Cbr1-like_FAD-bd_dom"/>
</dbReference>
<dbReference type="InterPro" id="IPR017927">
    <property type="entry name" value="FAD-bd_FR_type"/>
</dbReference>
<dbReference type="InterPro" id="IPR001709">
    <property type="entry name" value="Flavoprot_Pyr_Nucl_cyt_Rdtase"/>
</dbReference>
<dbReference type="InterPro" id="IPR039261">
    <property type="entry name" value="FNR_nucleotide-bd"/>
</dbReference>
<dbReference type="InterPro" id="IPR001433">
    <property type="entry name" value="OxRdtase_FAD/NAD-bd"/>
</dbReference>
<dbReference type="InterPro" id="IPR017938">
    <property type="entry name" value="Riboflavin_synthase-like_b-brl"/>
</dbReference>
<dbReference type="PANTHER" id="PTHR19370">
    <property type="entry name" value="NADH-CYTOCHROME B5 REDUCTASE"/>
    <property type="match status" value="1"/>
</dbReference>
<dbReference type="PANTHER" id="PTHR19370:SF171">
    <property type="entry name" value="NADH-CYTOCHROME B5 REDUCTASE 2"/>
    <property type="match status" value="1"/>
</dbReference>
<dbReference type="Pfam" id="PF00970">
    <property type="entry name" value="FAD_binding_6"/>
    <property type="match status" value="1"/>
</dbReference>
<dbReference type="Pfam" id="PF00175">
    <property type="entry name" value="NAD_binding_1"/>
    <property type="match status" value="1"/>
</dbReference>
<dbReference type="PRINTS" id="PR00406">
    <property type="entry name" value="CYTB5RDTASE"/>
</dbReference>
<dbReference type="PRINTS" id="PR00371">
    <property type="entry name" value="FPNCR"/>
</dbReference>
<dbReference type="SUPFAM" id="SSF52343">
    <property type="entry name" value="Ferredoxin reductase-like, C-terminal NADP-linked domain"/>
    <property type="match status" value="1"/>
</dbReference>
<dbReference type="SUPFAM" id="SSF63380">
    <property type="entry name" value="Riboflavin synthase domain-like"/>
    <property type="match status" value="1"/>
</dbReference>
<dbReference type="PROSITE" id="PS51384">
    <property type="entry name" value="FAD_FR"/>
    <property type="match status" value="1"/>
</dbReference>
<organism>
    <name type="scientific">Aspergillus niger (strain ATCC MYA-4892 / CBS 513.88 / FGSC A1513)</name>
    <dbReference type="NCBI Taxonomy" id="425011"/>
    <lineage>
        <taxon>Eukaryota</taxon>
        <taxon>Fungi</taxon>
        <taxon>Dikarya</taxon>
        <taxon>Ascomycota</taxon>
        <taxon>Pezizomycotina</taxon>
        <taxon>Eurotiomycetes</taxon>
        <taxon>Eurotiomycetidae</taxon>
        <taxon>Eurotiales</taxon>
        <taxon>Aspergillaceae</taxon>
        <taxon>Aspergillus</taxon>
        <taxon>Aspergillus subgen. Circumdati</taxon>
    </lineage>
</organism>
<gene>
    <name type="primary">mcr1</name>
    <name type="ORF">An01g03570</name>
</gene>